<keyword id="KW-0067">ATP-binding</keyword>
<keyword id="KW-0133">Cell shape</keyword>
<keyword id="KW-0961">Cell wall biogenesis/degradation</keyword>
<keyword id="KW-0963">Cytoplasm</keyword>
<keyword id="KW-0436">Ligase</keyword>
<keyword id="KW-0460">Magnesium</keyword>
<keyword id="KW-0464">Manganese</keyword>
<keyword id="KW-0479">Metal-binding</keyword>
<keyword id="KW-0547">Nucleotide-binding</keyword>
<keyword id="KW-0573">Peptidoglycan synthesis</keyword>
<feature type="chain" id="PRO_0000341081" description="D-alanine--D-alanine ligase">
    <location>
        <begin position="1"/>
        <end position="322"/>
    </location>
</feature>
<feature type="domain" description="ATP-grasp" evidence="2">
    <location>
        <begin position="110"/>
        <end position="310"/>
    </location>
</feature>
<feature type="binding site" evidence="2">
    <location>
        <begin position="137"/>
        <end position="191"/>
    </location>
    <ligand>
        <name>ATP</name>
        <dbReference type="ChEBI" id="CHEBI:30616"/>
    </ligand>
</feature>
<feature type="binding site" evidence="2">
    <location>
        <position position="263"/>
    </location>
    <ligand>
        <name>Mg(2+)</name>
        <dbReference type="ChEBI" id="CHEBI:18420"/>
        <label>1</label>
    </ligand>
</feature>
<feature type="binding site" evidence="2">
    <location>
        <position position="277"/>
    </location>
    <ligand>
        <name>Mg(2+)</name>
        <dbReference type="ChEBI" id="CHEBI:18420"/>
        <label>1</label>
    </ligand>
</feature>
<feature type="binding site" evidence="2">
    <location>
        <position position="277"/>
    </location>
    <ligand>
        <name>Mg(2+)</name>
        <dbReference type="ChEBI" id="CHEBI:18420"/>
        <label>2</label>
    </ligand>
</feature>
<feature type="binding site" evidence="2">
    <location>
        <position position="279"/>
    </location>
    <ligand>
        <name>Mg(2+)</name>
        <dbReference type="ChEBI" id="CHEBI:18420"/>
        <label>2</label>
    </ligand>
</feature>
<gene>
    <name evidence="2" type="primary">ddl</name>
    <name type="ordered locus">Caul_3660</name>
</gene>
<name>DDL_CAUSK</name>
<comment type="function">
    <text evidence="2">Cell wall formation.</text>
</comment>
<comment type="catalytic activity">
    <reaction evidence="2">
        <text>2 D-alanine + ATP = D-alanyl-D-alanine + ADP + phosphate + H(+)</text>
        <dbReference type="Rhea" id="RHEA:11224"/>
        <dbReference type="ChEBI" id="CHEBI:15378"/>
        <dbReference type="ChEBI" id="CHEBI:30616"/>
        <dbReference type="ChEBI" id="CHEBI:43474"/>
        <dbReference type="ChEBI" id="CHEBI:57416"/>
        <dbReference type="ChEBI" id="CHEBI:57822"/>
        <dbReference type="ChEBI" id="CHEBI:456216"/>
        <dbReference type="EC" id="6.3.2.4"/>
    </reaction>
</comment>
<comment type="cofactor">
    <cofactor evidence="1">
        <name>Mg(2+)</name>
        <dbReference type="ChEBI" id="CHEBI:18420"/>
    </cofactor>
    <cofactor evidence="1">
        <name>Mn(2+)</name>
        <dbReference type="ChEBI" id="CHEBI:29035"/>
    </cofactor>
    <text evidence="1">Binds 2 magnesium or manganese ions per subunit.</text>
</comment>
<comment type="pathway">
    <text evidence="2">Cell wall biogenesis; peptidoglycan biosynthesis.</text>
</comment>
<comment type="subcellular location">
    <subcellularLocation>
        <location evidence="2">Cytoplasm</location>
    </subcellularLocation>
</comment>
<comment type="similarity">
    <text evidence="2">Belongs to the D-alanine--D-alanine ligase family.</text>
</comment>
<accession>B0T824</accession>
<sequence>MTPANPKPLANHHIAVLLGGPSAEREVSLVTGAAYAAALERLGARVSRVDPGKDVAQVLTALAPDLVFNGLHGRWGEDGCVQGVLETLGLAYTHSGVLASALAMDKAKSKAVLAAAGIPVPGGGLFDRHDVAQGHVMPPPYVVKPNAEGSSVGVSLVFEGANGPPRQLAAPDWAFGEQVMVEPYIPGLELAVAVVGESNGPRALAVTEIRSSTGFYDYDAKYSQGGSIHVLPAPIPDAVRDRALHLAKLGHTALGCQGVTRSDFRYDDINDLLVLLEVNTQPGMTPTSLVPEQADHAGVSFDRLVFWIVEDAYARRFAGGIA</sequence>
<reference key="1">
    <citation type="submission" date="2008-01" db="EMBL/GenBank/DDBJ databases">
        <title>Complete sequence of chromosome of Caulobacter sp. K31.</title>
        <authorList>
            <consortium name="US DOE Joint Genome Institute"/>
            <person name="Copeland A."/>
            <person name="Lucas S."/>
            <person name="Lapidus A."/>
            <person name="Barry K."/>
            <person name="Glavina del Rio T."/>
            <person name="Dalin E."/>
            <person name="Tice H."/>
            <person name="Pitluck S."/>
            <person name="Bruce D."/>
            <person name="Goodwin L."/>
            <person name="Thompson L.S."/>
            <person name="Brettin T."/>
            <person name="Detter J.C."/>
            <person name="Han C."/>
            <person name="Schmutz J."/>
            <person name="Larimer F."/>
            <person name="Land M."/>
            <person name="Hauser L."/>
            <person name="Kyrpides N."/>
            <person name="Kim E."/>
            <person name="Stephens C."/>
            <person name="Richardson P."/>
        </authorList>
    </citation>
    <scope>NUCLEOTIDE SEQUENCE [LARGE SCALE GENOMIC DNA]</scope>
    <source>
        <strain>K31</strain>
    </source>
</reference>
<proteinExistence type="inferred from homology"/>
<dbReference type="EC" id="6.3.2.4" evidence="2"/>
<dbReference type="EMBL" id="CP000927">
    <property type="protein sequence ID" value="ABZ72787.1"/>
    <property type="molecule type" value="Genomic_DNA"/>
</dbReference>
<dbReference type="SMR" id="B0T824"/>
<dbReference type="STRING" id="366602.Caul_3660"/>
<dbReference type="KEGG" id="cak:Caul_3660"/>
<dbReference type="eggNOG" id="COG1181">
    <property type="taxonomic scope" value="Bacteria"/>
</dbReference>
<dbReference type="HOGENOM" id="CLU_039268_1_1_5"/>
<dbReference type="OrthoDB" id="9813261at2"/>
<dbReference type="UniPathway" id="UPA00219"/>
<dbReference type="GO" id="GO:0005737">
    <property type="term" value="C:cytoplasm"/>
    <property type="evidence" value="ECO:0007669"/>
    <property type="project" value="UniProtKB-SubCell"/>
</dbReference>
<dbReference type="GO" id="GO:0005524">
    <property type="term" value="F:ATP binding"/>
    <property type="evidence" value="ECO:0007669"/>
    <property type="project" value="UniProtKB-KW"/>
</dbReference>
<dbReference type="GO" id="GO:0008716">
    <property type="term" value="F:D-alanine-D-alanine ligase activity"/>
    <property type="evidence" value="ECO:0007669"/>
    <property type="project" value="UniProtKB-UniRule"/>
</dbReference>
<dbReference type="GO" id="GO:0046872">
    <property type="term" value="F:metal ion binding"/>
    <property type="evidence" value="ECO:0007669"/>
    <property type="project" value="UniProtKB-KW"/>
</dbReference>
<dbReference type="GO" id="GO:0071555">
    <property type="term" value="P:cell wall organization"/>
    <property type="evidence" value="ECO:0007669"/>
    <property type="project" value="UniProtKB-KW"/>
</dbReference>
<dbReference type="GO" id="GO:0009252">
    <property type="term" value="P:peptidoglycan biosynthetic process"/>
    <property type="evidence" value="ECO:0007669"/>
    <property type="project" value="UniProtKB-UniRule"/>
</dbReference>
<dbReference type="GO" id="GO:0008360">
    <property type="term" value="P:regulation of cell shape"/>
    <property type="evidence" value="ECO:0007669"/>
    <property type="project" value="UniProtKB-KW"/>
</dbReference>
<dbReference type="Gene3D" id="3.40.50.20">
    <property type="match status" value="1"/>
</dbReference>
<dbReference type="Gene3D" id="3.30.1490.20">
    <property type="entry name" value="ATP-grasp fold, A domain"/>
    <property type="match status" value="1"/>
</dbReference>
<dbReference type="Gene3D" id="3.30.470.20">
    <property type="entry name" value="ATP-grasp fold, B domain"/>
    <property type="match status" value="1"/>
</dbReference>
<dbReference type="HAMAP" id="MF_00047">
    <property type="entry name" value="Dala_Dala_lig"/>
    <property type="match status" value="1"/>
</dbReference>
<dbReference type="InterPro" id="IPR011761">
    <property type="entry name" value="ATP-grasp"/>
</dbReference>
<dbReference type="InterPro" id="IPR013815">
    <property type="entry name" value="ATP_grasp_subdomain_1"/>
</dbReference>
<dbReference type="InterPro" id="IPR000291">
    <property type="entry name" value="D-Ala_lig_Van_CS"/>
</dbReference>
<dbReference type="InterPro" id="IPR005905">
    <property type="entry name" value="D_ala_D_ala"/>
</dbReference>
<dbReference type="InterPro" id="IPR011095">
    <property type="entry name" value="Dala_Dala_lig_C"/>
</dbReference>
<dbReference type="InterPro" id="IPR016185">
    <property type="entry name" value="PreATP-grasp_dom_sf"/>
</dbReference>
<dbReference type="NCBIfam" id="TIGR01205">
    <property type="entry name" value="D_ala_D_alaTIGR"/>
    <property type="match status" value="1"/>
</dbReference>
<dbReference type="NCBIfam" id="NF002378">
    <property type="entry name" value="PRK01372.1"/>
    <property type="match status" value="1"/>
</dbReference>
<dbReference type="PANTHER" id="PTHR23132">
    <property type="entry name" value="D-ALANINE--D-ALANINE LIGASE"/>
    <property type="match status" value="1"/>
</dbReference>
<dbReference type="PANTHER" id="PTHR23132:SF23">
    <property type="entry name" value="D-ALANINE--D-ALANINE LIGASE B"/>
    <property type="match status" value="1"/>
</dbReference>
<dbReference type="Pfam" id="PF07478">
    <property type="entry name" value="Dala_Dala_lig_C"/>
    <property type="match status" value="1"/>
</dbReference>
<dbReference type="PIRSF" id="PIRSF039102">
    <property type="entry name" value="Ddl/VanB"/>
    <property type="match status" value="1"/>
</dbReference>
<dbReference type="SUPFAM" id="SSF56059">
    <property type="entry name" value="Glutathione synthetase ATP-binding domain-like"/>
    <property type="match status" value="1"/>
</dbReference>
<dbReference type="SUPFAM" id="SSF52440">
    <property type="entry name" value="PreATP-grasp domain"/>
    <property type="match status" value="1"/>
</dbReference>
<dbReference type="PROSITE" id="PS50975">
    <property type="entry name" value="ATP_GRASP"/>
    <property type="match status" value="1"/>
</dbReference>
<dbReference type="PROSITE" id="PS00843">
    <property type="entry name" value="DALA_DALA_LIGASE_1"/>
    <property type="match status" value="1"/>
</dbReference>
<dbReference type="PROSITE" id="PS00844">
    <property type="entry name" value="DALA_DALA_LIGASE_2"/>
    <property type="match status" value="1"/>
</dbReference>
<protein>
    <recommendedName>
        <fullName evidence="2">D-alanine--D-alanine ligase</fullName>
        <ecNumber evidence="2">6.3.2.4</ecNumber>
    </recommendedName>
    <alternativeName>
        <fullName evidence="2">D-Ala-D-Ala ligase</fullName>
    </alternativeName>
    <alternativeName>
        <fullName evidence="2">D-alanylalanine synthetase</fullName>
    </alternativeName>
</protein>
<organism>
    <name type="scientific">Caulobacter sp. (strain K31)</name>
    <dbReference type="NCBI Taxonomy" id="366602"/>
    <lineage>
        <taxon>Bacteria</taxon>
        <taxon>Pseudomonadati</taxon>
        <taxon>Pseudomonadota</taxon>
        <taxon>Alphaproteobacteria</taxon>
        <taxon>Caulobacterales</taxon>
        <taxon>Caulobacteraceae</taxon>
        <taxon>Caulobacter</taxon>
    </lineage>
</organism>
<evidence type="ECO:0000250" key="1"/>
<evidence type="ECO:0000255" key="2">
    <source>
        <dbReference type="HAMAP-Rule" id="MF_00047"/>
    </source>
</evidence>